<comment type="similarity">
    <text evidence="1">Belongs to the elongation factor P family.</text>
</comment>
<keyword id="KW-1185">Reference proteome</keyword>
<dbReference type="EMBL" id="BX571868">
    <property type="protein sequence ID" value="CAE15235.1"/>
    <property type="molecule type" value="Genomic_DNA"/>
</dbReference>
<dbReference type="RefSeq" id="WP_011147081.1">
    <property type="nucleotide sequence ID" value="NC_005126.1"/>
</dbReference>
<dbReference type="SMR" id="Q7N360"/>
<dbReference type="STRING" id="243265.plu2861"/>
<dbReference type="GeneID" id="48849123"/>
<dbReference type="KEGG" id="plu:plu2861"/>
<dbReference type="eggNOG" id="COG0231">
    <property type="taxonomic scope" value="Bacteria"/>
</dbReference>
<dbReference type="HOGENOM" id="CLU_074944_2_0_6"/>
<dbReference type="OrthoDB" id="5599402at2"/>
<dbReference type="Proteomes" id="UP000002514">
    <property type="component" value="Chromosome"/>
</dbReference>
<dbReference type="GO" id="GO:0005737">
    <property type="term" value="C:cytoplasm"/>
    <property type="evidence" value="ECO:0007669"/>
    <property type="project" value="InterPro"/>
</dbReference>
<dbReference type="GO" id="GO:0003746">
    <property type="term" value="F:translation elongation factor activity"/>
    <property type="evidence" value="ECO:0007669"/>
    <property type="project" value="UniProtKB-UniRule"/>
</dbReference>
<dbReference type="GO" id="GO:0043043">
    <property type="term" value="P:peptide biosynthetic process"/>
    <property type="evidence" value="ECO:0007669"/>
    <property type="project" value="InterPro"/>
</dbReference>
<dbReference type="CDD" id="cd04470">
    <property type="entry name" value="S1_EF-P_repeat_1"/>
    <property type="match status" value="1"/>
</dbReference>
<dbReference type="CDD" id="cd05794">
    <property type="entry name" value="S1_EF-P_repeat_2"/>
    <property type="match status" value="1"/>
</dbReference>
<dbReference type="FunFam" id="2.40.50.140:FF:000004">
    <property type="entry name" value="Elongation factor P"/>
    <property type="match status" value="1"/>
</dbReference>
<dbReference type="FunFam" id="2.30.30.30:FF:000011">
    <property type="entry name" value="Elongation factor P-like protein"/>
    <property type="match status" value="1"/>
</dbReference>
<dbReference type="FunFam" id="2.40.50.140:FF:000053">
    <property type="entry name" value="Elongation factor P-like protein"/>
    <property type="match status" value="1"/>
</dbReference>
<dbReference type="Gene3D" id="2.30.30.30">
    <property type="match status" value="1"/>
</dbReference>
<dbReference type="Gene3D" id="2.40.50.140">
    <property type="entry name" value="Nucleic acid-binding proteins"/>
    <property type="match status" value="2"/>
</dbReference>
<dbReference type="HAMAP" id="MF_00646">
    <property type="entry name" value="EFP"/>
    <property type="match status" value="1"/>
</dbReference>
<dbReference type="InterPro" id="IPR015365">
    <property type="entry name" value="Elong-fact-P_C"/>
</dbReference>
<dbReference type="InterPro" id="IPR012340">
    <property type="entry name" value="NA-bd_OB-fold"/>
</dbReference>
<dbReference type="InterPro" id="IPR014722">
    <property type="entry name" value="Rib_uL2_dom2"/>
</dbReference>
<dbReference type="InterPro" id="IPR020599">
    <property type="entry name" value="Transl_elong_fac_P/YeiP"/>
</dbReference>
<dbReference type="InterPro" id="IPR013185">
    <property type="entry name" value="Transl_elong_KOW-like"/>
</dbReference>
<dbReference type="InterPro" id="IPR011897">
    <property type="entry name" value="Transl_elong_p-like_YeiP"/>
</dbReference>
<dbReference type="InterPro" id="IPR001059">
    <property type="entry name" value="Transl_elong_P/YeiP_cen"/>
</dbReference>
<dbReference type="InterPro" id="IPR013852">
    <property type="entry name" value="Transl_elong_P/YeiP_CS"/>
</dbReference>
<dbReference type="InterPro" id="IPR008991">
    <property type="entry name" value="Translation_prot_SH3-like_sf"/>
</dbReference>
<dbReference type="NCBIfam" id="NF001810">
    <property type="entry name" value="PRK00529.1"/>
    <property type="match status" value="1"/>
</dbReference>
<dbReference type="NCBIfam" id="NF003392">
    <property type="entry name" value="PRK04542.1"/>
    <property type="match status" value="1"/>
</dbReference>
<dbReference type="NCBIfam" id="TIGR02178">
    <property type="entry name" value="yeiP"/>
    <property type="match status" value="1"/>
</dbReference>
<dbReference type="PANTHER" id="PTHR30053">
    <property type="entry name" value="ELONGATION FACTOR P"/>
    <property type="match status" value="1"/>
</dbReference>
<dbReference type="PANTHER" id="PTHR30053:SF14">
    <property type="entry name" value="TRANSLATION ELONGATION FACTOR KOW-LIKE DOMAIN-CONTAINING PROTEIN"/>
    <property type="match status" value="1"/>
</dbReference>
<dbReference type="Pfam" id="PF01132">
    <property type="entry name" value="EFP"/>
    <property type="match status" value="1"/>
</dbReference>
<dbReference type="Pfam" id="PF08207">
    <property type="entry name" value="EFP_N"/>
    <property type="match status" value="1"/>
</dbReference>
<dbReference type="Pfam" id="PF09285">
    <property type="entry name" value="Elong-fact-P_C"/>
    <property type="match status" value="1"/>
</dbReference>
<dbReference type="PIRSF" id="PIRSF005901">
    <property type="entry name" value="EF-P"/>
    <property type="match status" value="1"/>
</dbReference>
<dbReference type="SMART" id="SM01185">
    <property type="entry name" value="EFP"/>
    <property type="match status" value="1"/>
</dbReference>
<dbReference type="SMART" id="SM00841">
    <property type="entry name" value="Elong-fact-P_C"/>
    <property type="match status" value="1"/>
</dbReference>
<dbReference type="SUPFAM" id="SSF50249">
    <property type="entry name" value="Nucleic acid-binding proteins"/>
    <property type="match status" value="2"/>
</dbReference>
<dbReference type="SUPFAM" id="SSF50104">
    <property type="entry name" value="Translation proteins SH3-like domain"/>
    <property type="match status" value="1"/>
</dbReference>
<dbReference type="PROSITE" id="PS01275">
    <property type="entry name" value="EFP"/>
    <property type="match status" value="1"/>
</dbReference>
<proteinExistence type="inferred from homology"/>
<name>EFPL_PHOLL</name>
<evidence type="ECO:0000255" key="1">
    <source>
        <dbReference type="HAMAP-Rule" id="MF_00646"/>
    </source>
</evidence>
<protein>
    <recommendedName>
        <fullName evidence="1">Elongation factor P-like protein</fullName>
    </recommendedName>
</protein>
<feature type="chain" id="PRO_0000094383" description="Elongation factor P-like protein">
    <location>
        <begin position="1"/>
        <end position="190"/>
    </location>
</feature>
<gene>
    <name type="ordered locus">plu2861</name>
</gene>
<sequence>MAKANEIKRGSAVSYNGKLLLVKDIDIQAPSARGASTLYKMRFTDIRTGQKVEERFKGDDILDTISLTRRSVNFSYIDGDEYVFMDDEDFTPYHFKKEQIEEELLFIPEGGLPGMQVLTIEGQVIALELPQTVDMVIEETAPGIKGASASARTKPAKMSTGLTVQVPEYISSGERIRIHIAERRYMGRCD</sequence>
<accession>Q7N360</accession>
<reference key="1">
    <citation type="journal article" date="2003" name="Nat. Biotechnol.">
        <title>The genome sequence of the entomopathogenic bacterium Photorhabdus luminescens.</title>
        <authorList>
            <person name="Duchaud E."/>
            <person name="Rusniok C."/>
            <person name="Frangeul L."/>
            <person name="Buchrieser C."/>
            <person name="Givaudan A."/>
            <person name="Taourit S."/>
            <person name="Bocs S."/>
            <person name="Boursaux-Eude C."/>
            <person name="Chandler M."/>
            <person name="Charles J.-F."/>
            <person name="Dassa E."/>
            <person name="Derose R."/>
            <person name="Derzelle S."/>
            <person name="Freyssinet G."/>
            <person name="Gaudriault S."/>
            <person name="Medigue C."/>
            <person name="Lanois A."/>
            <person name="Powell K."/>
            <person name="Siguier P."/>
            <person name="Vincent R."/>
            <person name="Wingate V."/>
            <person name="Zouine M."/>
            <person name="Glaser P."/>
            <person name="Boemare N."/>
            <person name="Danchin A."/>
            <person name="Kunst F."/>
        </authorList>
    </citation>
    <scope>NUCLEOTIDE SEQUENCE [LARGE SCALE GENOMIC DNA]</scope>
    <source>
        <strain>DSM 15139 / CIP 105565 / TT01</strain>
    </source>
</reference>
<organism>
    <name type="scientific">Photorhabdus laumondii subsp. laumondii (strain DSM 15139 / CIP 105565 / TT01)</name>
    <name type="common">Photorhabdus luminescens subsp. laumondii</name>
    <dbReference type="NCBI Taxonomy" id="243265"/>
    <lineage>
        <taxon>Bacteria</taxon>
        <taxon>Pseudomonadati</taxon>
        <taxon>Pseudomonadota</taxon>
        <taxon>Gammaproteobacteria</taxon>
        <taxon>Enterobacterales</taxon>
        <taxon>Morganellaceae</taxon>
        <taxon>Photorhabdus</taxon>
    </lineage>
</organism>